<comment type="function">
    <text evidence="1">Produces ATP from ADP in the presence of a proton gradient across the membrane.</text>
</comment>
<comment type="subunit">
    <text>F-type ATPases have 2 components, CF(1) - the catalytic core - and CF(0) - the membrane proton channel. CF(1) has five subunits: alpha(3), beta(3), gamma(1), delta(1), epsilon(1). CF(0) has three main subunits: a, b and c.</text>
</comment>
<comment type="subcellular location">
    <subcellularLocation>
        <location evidence="1">Cell inner membrane</location>
        <topology evidence="1">Peripheral membrane protein</topology>
    </subcellularLocation>
</comment>
<comment type="similarity">
    <text evidence="1">Belongs to the ATPase epsilon chain family.</text>
</comment>
<accession>Q5WSG9</accession>
<dbReference type="EMBL" id="CR628337">
    <property type="protein sequence ID" value="CAH17153.1"/>
    <property type="molecule type" value="Genomic_DNA"/>
</dbReference>
<dbReference type="RefSeq" id="WP_011216819.1">
    <property type="nucleotide sequence ID" value="NC_006369.1"/>
</dbReference>
<dbReference type="SMR" id="Q5WSG9"/>
<dbReference type="KEGG" id="lpf:lpl2909"/>
<dbReference type="LegioList" id="lpl2909"/>
<dbReference type="HOGENOM" id="CLU_084338_2_0_6"/>
<dbReference type="Proteomes" id="UP000002517">
    <property type="component" value="Chromosome"/>
</dbReference>
<dbReference type="GO" id="GO:0005886">
    <property type="term" value="C:plasma membrane"/>
    <property type="evidence" value="ECO:0007669"/>
    <property type="project" value="UniProtKB-SubCell"/>
</dbReference>
<dbReference type="GO" id="GO:0045259">
    <property type="term" value="C:proton-transporting ATP synthase complex"/>
    <property type="evidence" value="ECO:0007669"/>
    <property type="project" value="UniProtKB-KW"/>
</dbReference>
<dbReference type="GO" id="GO:0005524">
    <property type="term" value="F:ATP binding"/>
    <property type="evidence" value="ECO:0007669"/>
    <property type="project" value="UniProtKB-UniRule"/>
</dbReference>
<dbReference type="GO" id="GO:0046933">
    <property type="term" value="F:proton-transporting ATP synthase activity, rotational mechanism"/>
    <property type="evidence" value="ECO:0007669"/>
    <property type="project" value="UniProtKB-UniRule"/>
</dbReference>
<dbReference type="CDD" id="cd12152">
    <property type="entry name" value="F1-ATPase_delta"/>
    <property type="match status" value="1"/>
</dbReference>
<dbReference type="FunFam" id="1.20.5.440:FF:000001">
    <property type="entry name" value="ATP synthase epsilon chain"/>
    <property type="match status" value="1"/>
</dbReference>
<dbReference type="FunFam" id="2.60.15.10:FF:000001">
    <property type="entry name" value="ATP synthase epsilon chain"/>
    <property type="match status" value="1"/>
</dbReference>
<dbReference type="Gene3D" id="1.20.5.440">
    <property type="entry name" value="ATP synthase delta/epsilon subunit, C-terminal domain"/>
    <property type="match status" value="1"/>
</dbReference>
<dbReference type="Gene3D" id="2.60.15.10">
    <property type="entry name" value="F0F1 ATP synthase delta/epsilon subunit, N-terminal"/>
    <property type="match status" value="1"/>
</dbReference>
<dbReference type="HAMAP" id="MF_00530">
    <property type="entry name" value="ATP_synth_epsil_bac"/>
    <property type="match status" value="1"/>
</dbReference>
<dbReference type="InterPro" id="IPR036794">
    <property type="entry name" value="ATP_F1_dsu/esu_C_sf"/>
</dbReference>
<dbReference type="InterPro" id="IPR001469">
    <property type="entry name" value="ATP_synth_F1_dsu/esu"/>
</dbReference>
<dbReference type="InterPro" id="IPR020546">
    <property type="entry name" value="ATP_synth_F1_dsu/esu_N"/>
</dbReference>
<dbReference type="InterPro" id="IPR020547">
    <property type="entry name" value="ATP_synth_F1_esu_C"/>
</dbReference>
<dbReference type="InterPro" id="IPR036771">
    <property type="entry name" value="ATPsynth_dsu/esu_N"/>
</dbReference>
<dbReference type="NCBIfam" id="TIGR01216">
    <property type="entry name" value="ATP_synt_epsi"/>
    <property type="match status" value="1"/>
</dbReference>
<dbReference type="NCBIfam" id="NF001847">
    <property type="entry name" value="PRK00571.1-4"/>
    <property type="match status" value="1"/>
</dbReference>
<dbReference type="PANTHER" id="PTHR13822">
    <property type="entry name" value="ATP SYNTHASE DELTA/EPSILON CHAIN"/>
    <property type="match status" value="1"/>
</dbReference>
<dbReference type="PANTHER" id="PTHR13822:SF10">
    <property type="entry name" value="ATP SYNTHASE EPSILON CHAIN, CHLOROPLASTIC"/>
    <property type="match status" value="1"/>
</dbReference>
<dbReference type="Pfam" id="PF00401">
    <property type="entry name" value="ATP-synt_DE"/>
    <property type="match status" value="1"/>
</dbReference>
<dbReference type="Pfam" id="PF02823">
    <property type="entry name" value="ATP-synt_DE_N"/>
    <property type="match status" value="1"/>
</dbReference>
<dbReference type="SUPFAM" id="SSF46604">
    <property type="entry name" value="Epsilon subunit of F1F0-ATP synthase C-terminal domain"/>
    <property type="match status" value="1"/>
</dbReference>
<dbReference type="SUPFAM" id="SSF51344">
    <property type="entry name" value="Epsilon subunit of F1F0-ATP synthase N-terminal domain"/>
    <property type="match status" value="1"/>
</dbReference>
<feature type="chain" id="PRO_0000265832" description="ATP synthase epsilon chain">
    <location>
        <begin position="1"/>
        <end position="140"/>
    </location>
</feature>
<reference key="1">
    <citation type="journal article" date="2004" name="Nat. Genet.">
        <title>Evidence in the Legionella pneumophila genome for exploitation of host cell functions and high genome plasticity.</title>
        <authorList>
            <person name="Cazalet C."/>
            <person name="Rusniok C."/>
            <person name="Brueggemann H."/>
            <person name="Zidane N."/>
            <person name="Magnier A."/>
            <person name="Ma L."/>
            <person name="Tichit M."/>
            <person name="Jarraud S."/>
            <person name="Bouchier C."/>
            <person name="Vandenesch F."/>
            <person name="Kunst F."/>
            <person name="Etienne J."/>
            <person name="Glaser P."/>
            <person name="Buchrieser C."/>
        </authorList>
    </citation>
    <scope>NUCLEOTIDE SEQUENCE [LARGE SCALE GENOMIC DNA]</scope>
    <source>
        <strain>Lens</strain>
    </source>
</reference>
<name>ATPE_LEGPL</name>
<keyword id="KW-0066">ATP synthesis</keyword>
<keyword id="KW-0997">Cell inner membrane</keyword>
<keyword id="KW-1003">Cell membrane</keyword>
<keyword id="KW-0139">CF(1)</keyword>
<keyword id="KW-0375">Hydrogen ion transport</keyword>
<keyword id="KW-0406">Ion transport</keyword>
<keyword id="KW-0472">Membrane</keyword>
<keyword id="KW-0813">Transport</keyword>
<protein>
    <recommendedName>
        <fullName evidence="1">ATP synthase epsilon chain</fullName>
    </recommendedName>
    <alternativeName>
        <fullName evidence="1">ATP synthase F1 sector epsilon subunit</fullName>
    </alternativeName>
    <alternativeName>
        <fullName evidence="1">F-ATPase epsilon subunit</fullName>
    </alternativeName>
</protein>
<proteinExistence type="inferred from homology"/>
<evidence type="ECO:0000255" key="1">
    <source>
        <dbReference type="HAMAP-Rule" id="MF_00530"/>
    </source>
</evidence>
<organism>
    <name type="scientific">Legionella pneumophila (strain Lens)</name>
    <dbReference type="NCBI Taxonomy" id="297245"/>
    <lineage>
        <taxon>Bacteria</taxon>
        <taxon>Pseudomonadati</taxon>
        <taxon>Pseudomonadota</taxon>
        <taxon>Gammaproteobacteria</taxon>
        <taxon>Legionellales</taxon>
        <taxon>Legionellaceae</taxon>
        <taxon>Legionella</taxon>
    </lineage>
</organism>
<gene>
    <name evidence="1" type="primary">atpC</name>
    <name type="ordered locus">lpl2909</name>
</gene>
<sequence length="140" mass="14738">MSITTHLDIVSAEHEIFSGVVELVVATGELGEIGITPGHAPLLTVLRPGEVRITLQGGTQDIYYVQGGMLEVQPHCVTILADVAERAEHLDEAAALAAKAKAEAAIASKGGDIDYSVAAAELARAVAQIRAIQKTRKKMK</sequence>